<dbReference type="EMBL" id="GU726489">
    <property type="protein sequence ID" value="ADR83705.1"/>
    <property type="molecule type" value="mRNA"/>
</dbReference>
<dbReference type="SMR" id="G4V3T9"/>
<dbReference type="GO" id="GO:0005576">
    <property type="term" value="C:extracellular region"/>
    <property type="evidence" value="ECO:0007669"/>
    <property type="project" value="UniProtKB-SubCell"/>
</dbReference>
<dbReference type="GO" id="GO:0019871">
    <property type="term" value="F:sodium channel inhibitor activity"/>
    <property type="evidence" value="ECO:0007669"/>
    <property type="project" value="InterPro"/>
</dbReference>
<dbReference type="GO" id="GO:0090729">
    <property type="term" value="F:toxin activity"/>
    <property type="evidence" value="ECO:0007669"/>
    <property type="project" value="UniProtKB-KW"/>
</dbReference>
<dbReference type="GO" id="GO:0006952">
    <property type="term" value="P:defense response"/>
    <property type="evidence" value="ECO:0007669"/>
    <property type="project" value="InterPro"/>
</dbReference>
<dbReference type="CDD" id="cd23106">
    <property type="entry name" value="neurotoxins_LC_scorpion"/>
    <property type="match status" value="1"/>
</dbReference>
<dbReference type="FunFam" id="3.30.30.10:FF:000002">
    <property type="entry name" value="Alpha-like toxin BmK-M1"/>
    <property type="match status" value="1"/>
</dbReference>
<dbReference type="Gene3D" id="3.30.30.10">
    <property type="entry name" value="Knottin, scorpion toxin-like"/>
    <property type="match status" value="1"/>
</dbReference>
<dbReference type="InterPro" id="IPR044062">
    <property type="entry name" value="LCN-type_CS_alpha_beta_dom"/>
</dbReference>
<dbReference type="InterPro" id="IPR003614">
    <property type="entry name" value="Scorpion_toxin-like"/>
</dbReference>
<dbReference type="InterPro" id="IPR036574">
    <property type="entry name" value="Scorpion_toxin-like_sf"/>
</dbReference>
<dbReference type="InterPro" id="IPR018218">
    <property type="entry name" value="Scorpion_toxinL"/>
</dbReference>
<dbReference type="InterPro" id="IPR002061">
    <property type="entry name" value="Scorpion_toxinL/defensin"/>
</dbReference>
<dbReference type="Pfam" id="PF00537">
    <property type="entry name" value="Toxin_3"/>
    <property type="match status" value="1"/>
</dbReference>
<dbReference type="PRINTS" id="PR00285">
    <property type="entry name" value="SCORPNTOXIN"/>
</dbReference>
<dbReference type="PRINTS" id="PR00284">
    <property type="entry name" value="TOXIN"/>
</dbReference>
<dbReference type="SMART" id="SM00505">
    <property type="entry name" value="Knot1"/>
    <property type="match status" value="1"/>
</dbReference>
<dbReference type="SUPFAM" id="SSF57095">
    <property type="entry name" value="Scorpion toxin-like"/>
    <property type="match status" value="1"/>
</dbReference>
<dbReference type="PROSITE" id="PS51863">
    <property type="entry name" value="LCN_CSAB"/>
    <property type="match status" value="1"/>
</dbReference>
<proteinExistence type="evidence at protein level"/>
<keyword id="KW-0903">Direct protein sequencing</keyword>
<keyword id="KW-1015">Disulfide bond</keyword>
<keyword id="KW-0872">Ion channel impairing toxin</keyword>
<keyword id="KW-0528">Neurotoxin</keyword>
<keyword id="KW-0964">Secreted</keyword>
<keyword id="KW-0800">Toxin</keyword>
<keyword id="KW-0738">Voltage-gated sodium channel impairing toxin</keyword>
<comment type="function">
    <text evidence="1 3">Alpha toxins bind voltage-independently at site-3 of sodium channels and inhibit the inactivation of the activated channels, thereby blocking neuronal transmission (By similarity). In vivo, shows analgesic activity (ED(50) is 1.42 mg/kg) and antitumor activity against Ehrlich ascites tumor and S-180 fibrosarcoma models (PubMed:24269605).</text>
</comment>
<comment type="subcellular location">
    <subcellularLocation>
        <location evidence="3">Secreted</location>
    </subcellularLocation>
</comment>
<comment type="tissue specificity">
    <text evidence="6">Expressed by the venom gland.</text>
</comment>
<comment type="domain">
    <text evidence="5">Has the structural arrangement of an alpha-helix connected to antiparallel beta-sheets by disulfide bonds (CS-alpha/beta).</text>
</comment>
<comment type="mass spectrometry"/>
<comment type="similarity">
    <text evidence="5">Belongs to the long (4 C-C) scorpion toxin superfamily. Sodium channel inhibitor family. Alpha subfamily.</text>
</comment>
<feature type="chain" id="PRO_0000428967" description="Neurotoxin BmK AGAP-SYPU2" evidence="6">
    <location>
        <begin position="1"/>
        <end position="65" status="greater than"/>
    </location>
</feature>
<feature type="domain" description="LCN-type CS-alpha/beta" evidence="2">
    <location>
        <begin position="2"/>
        <end position="64"/>
    </location>
</feature>
<feature type="disulfide bond" evidence="2">
    <location>
        <begin position="12"/>
        <end position="63"/>
    </location>
</feature>
<feature type="disulfide bond" evidence="2">
    <location>
        <begin position="16"/>
        <end position="36"/>
    </location>
</feature>
<feature type="disulfide bond" evidence="2">
    <location>
        <begin position="22"/>
        <end position="46"/>
    </location>
</feature>
<feature type="disulfide bond" evidence="2">
    <location>
        <begin position="26"/>
        <end position="48"/>
    </location>
</feature>
<feature type="non-terminal residue" evidence="6">
    <location>
        <position position="65"/>
    </location>
</feature>
<name>SCAA2_OLIMR</name>
<sequence>VKDGYIVDDKNCAYFCGRNAYCDDECEKNGAESGYCQWAGVYGNACWCYKLPDKVPIRVPGRCNG</sequence>
<organism>
    <name type="scientific">Olivierus martensii</name>
    <name type="common">Manchurian scorpion</name>
    <name type="synonym">Mesobuthus martensii</name>
    <dbReference type="NCBI Taxonomy" id="34649"/>
    <lineage>
        <taxon>Eukaryota</taxon>
        <taxon>Metazoa</taxon>
        <taxon>Ecdysozoa</taxon>
        <taxon>Arthropoda</taxon>
        <taxon>Chelicerata</taxon>
        <taxon>Arachnida</taxon>
        <taxon>Scorpiones</taxon>
        <taxon>Buthida</taxon>
        <taxon>Buthoidea</taxon>
        <taxon>Buthidae</taxon>
        <taxon>Olivierus</taxon>
    </lineage>
</organism>
<accession>G4V3T9</accession>
<evidence type="ECO:0000250" key="1"/>
<evidence type="ECO:0000255" key="2">
    <source>
        <dbReference type="PROSITE-ProRule" id="PRU01210"/>
    </source>
</evidence>
<evidence type="ECO:0000269" key="3">
    <source>
    </source>
</evidence>
<evidence type="ECO:0000303" key="4">
    <source>
    </source>
</evidence>
<evidence type="ECO:0000305" key="5"/>
<evidence type="ECO:0000305" key="6">
    <source>
    </source>
</evidence>
<protein>
    <recommendedName>
        <fullName evidence="4">Neurotoxin BmK AGAP-SYPU2</fullName>
    </recommendedName>
</protein>
<reference key="1">
    <citation type="journal article" date="2014" name="Peptides">
        <title>Purification, characterization, and bioactivity of a new analgesic-antitumor peptide from Chinese scorpion Buthus martensii Karsch.</title>
        <authorList>
            <person name="Shao J.H."/>
            <person name="Cui Y."/>
            <person name="Zhao M.Y."/>
            <person name="Wu C.F."/>
            <person name="Liu Y.F."/>
            <person name="Zhang J.H."/>
        </authorList>
    </citation>
    <scope>NUCLEOTIDE SEQUENCE [MRNA]</scope>
    <scope>PROTEIN SEQUENCE OF 1-12</scope>
    <scope>FUNCTION</scope>
    <scope>BIOASSAY</scope>
    <scope>MASS SPECTROMETRY</scope>
    <scope>3D-STRUCTURE MODELING</scope>
    <scope>SUBCELLULAR LOCATION</scope>
    <source>
        <tissue>Venom</tissue>
        <tissue>Venom gland</tissue>
    </source>
</reference>